<gene>
    <name evidence="1" type="primary">metE</name>
    <name type="ordered locus">TK1446</name>
</gene>
<dbReference type="EC" id="2.1.1.-" evidence="1"/>
<dbReference type="EMBL" id="AP006878">
    <property type="protein sequence ID" value="BAD85635.1"/>
    <property type="molecule type" value="Genomic_DNA"/>
</dbReference>
<dbReference type="RefSeq" id="WP_011250397.1">
    <property type="nucleotide sequence ID" value="NC_006624.1"/>
</dbReference>
<dbReference type="SMR" id="Q5JH51"/>
<dbReference type="FunCoup" id="Q5JH51">
    <property type="interactions" value="68"/>
</dbReference>
<dbReference type="STRING" id="69014.TK1446"/>
<dbReference type="EnsemblBacteria" id="BAD85635">
    <property type="protein sequence ID" value="BAD85635"/>
    <property type="gene ID" value="TK1446"/>
</dbReference>
<dbReference type="GeneID" id="78447969"/>
<dbReference type="KEGG" id="tko:TK1446"/>
<dbReference type="PATRIC" id="fig|69014.16.peg.1408"/>
<dbReference type="eggNOG" id="arCOG01876">
    <property type="taxonomic scope" value="Archaea"/>
</dbReference>
<dbReference type="HOGENOM" id="CLU_040013_3_2_2"/>
<dbReference type="InParanoid" id="Q5JH51"/>
<dbReference type="OrthoDB" id="17656at2157"/>
<dbReference type="PhylomeDB" id="Q5JH51"/>
<dbReference type="UniPathway" id="UPA00051"/>
<dbReference type="Proteomes" id="UP000000536">
    <property type="component" value="Chromosome"/>
</dbReference>
<dbReference type="GO" id="GO:0003871">
    <property type="term" value="F:5-methyltetrahydropteroyltriglutamate-homocysteine S-methyltransferase activity"/>
    <property type="evidence" value="ECO:0007669"/>
    <property type="project" value="InterPro"/>
</dbReference>
<dbReference type="GO" id="GO:0008270">
    <property type="term" value="F:zinc ion binding"/>
    <property type="evidence" value="ECO:0007669"/>
    <property type="project" value="InterPro"/>
</dbReference>
<dbReference type="GO" id="GO:0009086">
    <property type="term" value="P:methionine biosynthetic process"/>
    <property type="evidence" value="ECO:0007669"/>
    <property type="project" value="UniProtKB-UniRule"/>
</dbReference>
<dbReference type="GO" id="GO:0032259">
    <property type="term" value="P:methylation"/>
    <property type="evidence" value="ECO:0007669"/>
    <property type="project" value="UniProtKB-KW"/>
</dbReference>
<dbReference type="CDD" id="cd03311">
    <property type="entry name" value="CIMS_C_terminal_like"/>
    <property type="match status" value="1"/>
</dbReference>
<dbReference type="Gene3D" id="3.20.20.210">
    <property type="match status" value="1"/>
</dbReference>
<dbReference type="HAMAP" id="MF_00288">
    <property type="entry name" value="MetE"/>
    <property type="match status" value="1"/>
</dbReference>
<dbReference type="InterPro" id="IPR002629">
    <property type="entry name" value="Met_Synth_C/arc"/>
</dbReference>
<dbReference type="InterPro" id="IPR022921">
    <property type="entry name" value="MetE_arc"/>
</dbReference>
<dbReference type="InterPro" id="IPR038071">
    <property type="entry name" value="UROD/MetE-like_sf"/>
</dbReference>
<dbReference type="NCBIfam" id="NF003317">
    <property type="entry name" value="PRK04326.1"/>
    <property type="match status" value="1"/>
</dbReference>
<dbReference type="PANTHER" id="PTHR30519">
    <property type="entry name" value="5-METHYLTETRAHYDROPTEROYLTRIGLUTAMATE--HOMOCYSTEINE METHYLTRANSFERASE"/>
    <property type="match status" value="1"/>
</dbReference>
<dbReference type="Pfam" id="PF01717">
    <property type="entry name" value="Meth_synt_2"/>
    <property type="match status" value="1"/>
</dbReference>
<dbReference type="SUPFAM" id="SSF51726">
    <property type="entry name" value="UROD/MetE-like"/>
    <property type="match status" value="1"/>
</dbReference>
<evidence type="ECO:0000255" key="1">
    <source>
        <dbReference type="HAMAP-Rule" id="MF_00288"/>
    </source>
</evidence>
<evidence type="ECO:0000305" key="2"/>
<feature type="chain" id="PRO_0000098690" description="Methionine synthase">
    <location>
        <begin position="1"/>
        <end position="336"/>
    </location>
</feature>
<feature type="binding site" evidence="1">
    <location>
        <position position="210"/>
    </location>
    <ligand>
        <name>Zn(2+)</name>
        <dbReference type="ChEBI" id="CHEBI:29105"/>
        <note>catalytic</note>
    </ligand>
</feature>
<feature type="binding site" evidence="1">
    <location>
        <position position="212"/>
    </location>
    <ligand>
        <name>Zn(2+)</name>
        <dbReference type="ChEBI" id="CHEBI:29105"/>
        <note>catalytic</note>
    </ligand>
</feature>
<feature type="binding site" evidence="1">
    <location>
        <position position="234"/>
    </location>
    <ligand>
        <name>Zn(2+)</name>
        <dbReference type="ChEBI" id="CHEBI:29105"/>
        <note>catalytic</note>
    </ligand>
</feature>
<feature type="binding site" evidence="1">
    <location>
        <position position="294"/>
    </location>
    <ligand>
        <name>Zn(2+)</name>
        <dbReference type="ChEBI" id="CHEBI:29105"/>
        <note>catalytic</note>
    </ligand>
</feature>
<protein>
    <recommendedName>
        <fullName evidence="1">Methionine synthase</fullName>
        <ecNumber evidence="1">2.1.1.-</ecNumber>
    </recommendedName>
    <alternativeName>
        <fullName evidence="1">Homocysteine methyltransferase</fullName>
    </alternativeName>
</protein>
<accession>Q5JH51</accession>
<comment type="function">
    <text evidence="1">Catalyzes the transfer of a methyl group to L-homocysteine resulting in methionine formation. The physiological methyl donor is unknown.</text>
</comment>
<comment type="cofactor">
    <cofactor evidence="1">
        <name>Zn(2+)</name>
        <dbReference type="ChEBI" id="CHEBI:29105"/>
    </cofactor>
    <text evidence="1">Binds 1 zinc ion per subunit.</text>
</comment>
<comment type="pathway">
    <text evidence="1">Amino-acid biosynthesis; L-methionine biosynthesis via de novo pathway.</text>
</comment>
<comment type="similarity">
    <text evidence="1 2">Belongs to the archaeal MetE family.</text>
</comment>
<organism>
    <name type="scientific">Thermococcus kodakarensis (strain ATCC BAA-918 / JCM 12380 / KOD1)</name>
    <name type="common">Pyrococcus kodakaraensis (strain KOD1)</name>
    <dbReference type="NCBI Taxonomy" id="69014"/>
    <lineage>
        <taxon>Archaea</taxon>
        <taxon>Methanobacteriati</taxon>
        <taxon>Methanobacteriota</taxon>
        <taxon>Thermococci</taxon>
        <taxon>Thermococcales</taxon>
        <taxon>Thermococcaceae</taxon>
        <taxon>Thermococcus</taxon>
    </lineage>
</organism>
<name>METE_THEKO</name>
<sequence>MELPILPTSIIGSYPKPRWLLRMYNLRELGRLPEEDFREAVRDASVAVLREHERAGIDIPWDGEMGRSEMTEYFTAKIAGFKFYGPIRVWGNAYFNKAAAVSKLEYREPLVLDEFRWVKENTTREIIKVPITGPYTIAEWSFNEYYSSKEELAFDLAKILNKEFKLLEKEGATFIQIDEPAMLNHPDEVSIAVEAINRAVKGVKVKFGLHVCYSNYYLLADYFDDIKVSQFALEAANRNFRDLDYLKKLTHQELGFGVVDVHNPRVESPEEVAKAIRKVMEYIEPERLYINPDCGLKLLDRRIAYQKLVNMVKGVEIVRRELAREGKTSIPFRREV</sequence>
<keyword id="KW-0028">Amino-acid biosynthesis</keyword>
<keyword id="KW-0479">Metal-binding</keyword>
<keyword id="KW-0486">Methionine biosynthesis</keyword>
<keyword id="KW-0489">Methyltransferase</keyword>
<keyword id="KW-1185">Reference proteome</keyword>
<keyword id="KW-0808">Transferase</keyword>
<keyword id="KW-0862">Zinc</keyword>
<proteinExistence type="inferred from homology"/>
<reference key="1">
    <citation type="journal article" date="2005" name="Genome Res.">
        <title>Complete genome sequence of the hyperthermophilic archaeon Thermococcus kodakaraensis KOD1 and comparison with Pyrococcus genomes.</title>
        <authorList>
            <person name="Fukui T."/>
            <person name="Atomi H."/>
            <person name="Kanai T."/>
            <person name="Matsumi R."/>
            <person name="Fujiwara S."/>
            <person name="Imanaka T."/>
        </authorList>
    </citation>
    <scope>NUCLEOTIDE SEQUENCE [LARGE SCALE GENOMIC DNA]</scope>
    <source>
        <strain>ATCC BAA-918 / JCM 12380 / KOD1</strain>
    </source>
</reference>